<feature type="chain" id="PRO_0000336645" description="Sec-independent protein translocase protein TatA">
    <location>
        <begin position="1"/>
        <end position="91"/>
    </location>
</feature>
<feature type="transmembrane region" description="Helical" evidence="1">
    <location>
        <begin position="3"/>
        <end position="23"/>
    </location>
</feature>
<feature type="region of interest" description="Disordered" evidence="2">
    <location>
        <begin position="57"/>
        <end position="91"/>
    </location>
</feature>
<feature type="compositionally biased region" description="Low complexity" evidence="2">
    <location>
        <begin position="59"/>
        <end position="72"/>
    </location>
</feature>
<sequence length="91" mass="9908">MNFFGIGLPEMLVILAIALLVFGPKKLPEIGRSLGKALRGFQDASREFESEIKREIDRTPATPAEATVEPPVLDSAPTEAVTVEKQTETQV</sequence>
<name>TATA_SYNP6</name>
<reference key="1">
    <citation type="journal article" date="2007" name="Photosyn. Res.">
        <title>Complete nucleotide sequence of the freshwater unicellular cyanobacterium Synechococcus elongatus PCC 6301 chromosome: gene content and organization.</title>
        <authorList>
            <person name="Sugita C."/>
            <person name="Ogata K."/>
            <person name="Shikata M."/>
            <person name="Jikuya H."/>
            <person name="Takano J."/>
            <person name="Furumichi M."/>
            <person name="Kanehisa M."/>
            <person name="Omata T."/>
            <person name="Sugiura M."/>
            <person name="Sugita M."/>
        </authorList>
    </citation>
    <scope>NUCLEOTIDE SEQUENCE [LARGE SCALE GENOMIC DNA]</scope>
    <source>
        <strain>ATCC 27144 / PCC 6301 / SAUG 1402/1</strain>
    </source>
</reference>
<gene>
    <name evidence="1" type="primary">tatA</name>
    <name type="ordered locus">syc1287_c</name>
</gene>
<evidence type="ECO:0000255" key="1">
    <source>
        <dbReference type="HAMAP-Rule" id="MF_00236"/>
    </source>
</evidence>
<evidence type="ECO:0000256" key="2">
    <source>
        <dbReference type="SAM" id="MobiDB-lite"/>
    </source>
</evidence>
<protein>
    <recommendedName>
        <fullName evidence="1">Sec-independent protein translocase protein TatA</fullName>
    </recommendedName>
</protein>
<comment type="function">
    <text evidence="1">Part of the twin-arginine translocation (Tat) system that transports large folded proteins containing a characteristic twin-arginine motif in their signal peptide across membranes. TatA could form the protein-conducting channel of the Tat system.</text>
</comment>
<comment type="subunit">
    <text evidence="1">Forms a complex with TatC.</text>
</comment>
<comment type="subcellular location">
    <subcellularLocation>
        <location evidence="1">Cell inner membrane</location>
        <topology evidence="1">Single-pass membrane protein</topology>
    </subcellularLocation>
</comment>
<comment type="similarity">
    <text evidence="1">Belongs to the TatA/E family.</text>
</comment>
<proteinExistence type="inferred from homology"/>
<organism>
    <name type="scientific">Synechococcus sp. (strain ATCC 27144 / PCC 6301 / SAUG 1402/1)</name>
    <name type="common">Anacystis nidulans</name>
    <dbReference type="NCBI Taxonomy" id="269084"/>
    <lineage>
        <taxon>Bacteria</taxon>
        <taxon>Bacillati</taxon>
        <taxon>Cyanobacteriota</taxon>
        <taxon>Cyanophyceae</taxon>
        <taxon>Synechococcales</taxon>
        <taxon>Synechococcaceae</taxon>
        <taxon>Synechococcus</taxon>
    </lineage>
</organism>
<accession>Q5N2J3</accession>
<keyword id="KW-0997">Cell inner membrane</keyword>
<keyword id="KW-1003">Cell membrane</keyword>
<keyword id="KW-0472">Membrane</keyword>
<keyword id="KW-0653">Protein transport</keyword>
<keyword id="KW-0811">Translocation</keyword>
<keyword id="KW-0812">Transmembrane</keyword>
<keyword id="KW-1133">Transmembrane helix</keyword>
<keyword id="KW-0813">Transport</keyword>
<dbReference type="EMBL" id="AP008231">
    <property type="protein sequence ID" value="BAD79477.1"/>
    <property type="molecule type" value="Genomic_DNA"/>
</dbReference>
<dbReference type="RefSeq" id="WP_011243599.1">
    <property type="nucleotide sequence ID" value="NZ_CP085785.1"/>
</dbReference>
<dbReference type="KEGG" id="syc:syc1287_c"/>
<dbReference type="eggNOG" id="COG1826">
    <property type="taxonomic scope" value="Bacteria"/>
</dbReference>
<dbReference type="Proteomes" id="UP000001175">
    <property type="component" value="Chromosome"/>
</dbReference>
<dbReference type="GO" id="GO:0033281">
    <property type="term" value="C:TAT protein transport complex"/>
    <property type="evidence" value="ECO:0007669"/>
    <property type="project" value="UniProtKB-UniRule"/>
</dbReference>
<dbReference type="GO" id="GO:0008320">
    <property type="term" value="F:protein transmembrane transporter activity"/>
    <property type="evidence" value="ECO:0007669"/>
    <property type="project" value="UniProtKB-UniRule"/>
</dbReference>
<dbReference type="GO" id="GO:0043953">
    <property type="term" value="P:protein transport by the Tat complex"/>
    <property type="evidence" value="ECO:0007669"/>
    <property type="project" value="UniProtKB-UniRule"/>
</dbReference>
<dbReference type="Gene3D" id="1.20.5.3310">
    <property type="match status" value="1"/>
</dbReference>
<dbReference type="HAMAP" id="MF_00236">
    <property type="entry name" value="TatA_E"/>
    <property type="match status" value="1"/>
</dbReference>
<dbReference type="InterPro" id="IPR003369">
    <property type="entry name" value="TatA/B/E"/>
</dbReference>
<dbReference type="InterPro" id="IPR006312">
    <property type="entry name" value="TatA/E"/>
</dbReference>
<dbReference type="NCBIfam" id="NF011429">
    <property type="entry name" value="PRK14857.1"/>
    <property type="match status" value="1"/>
</dbReference>
<dbReference type="NCBIfam" id="NF011430">
    <property type="entry name" value="PRK14861.1"/>
    <property type="match status" value="1"/>
</dbReference>
<dbReference type="NCBIfam" id="TIGR01411">
    <property type="entry name" value="tatAE"/>
    <property type="match status" value="1"/>
</dbReference>
<dbReference type="PANTHER" id="PTHR33162">
    <property type="entry name" value="SEC-INDEPENDENT PROTEIN TRANSLOCASE PROTEIN TATA, CHLOROPLASTIC"/>
    <property type="match status" value="1"/>
</dbReference>
<dbReference type="PANTHER" id="PTHR33162:SF1">
    <property type="entry name" value="SEC-INDEPENDENT PROTEIN TRANSLOCASE PROTEIN TATA, CHLOROPLASTIC"/>
    <property type="match status" value="1"/>
</dbReference>
<dbReference type="Pfam" id="PF02416">
    <property type="entry name" value="TatA_B_E"/>
    <property type="match status" value="1"/>
</dbReference>
<dbReference type="PRINTS" id="PR01506">
    <property type="entry name" value="TATBPROTEIN"/>
</dbReference>